<reference key="1">
    <citation type="journal article" date="2007" name="PLoS Biol.">
        <title>Evolution of symbiotic bacteria in the distal human intestine.</title>
        <authorList>
            <person name="Xu J."/>
            <person name="Mahowald M.A."/>
            <person name="Ley R.E."/>
            <person name="Lozupone C.A."/>
            <person name="Hamady M."/>
            <person name="Martens E.C."/>
            <person name="Henrissat B."/>
            <person name="Coutinho P.M."/>
            <person name="Minx P."/>
            <person name="Latreille P."/>
            <person name="Cordum H."/>
            <person name="Van Brunt A."/>
            <person name="Kim K."/>
            <person name="Fulton R.S."/>
            <person name="Fulton L.A."/>
            <person name="Clifton S.W."/>
            <person name="Wilson R.K."/>
            <person name="Knight R.D."/>
            <person name="Gordon J.I."/>
        </authorList>
    </citation>
    <scope>NUCLEOTIDE SEQUENCE [LARGE SCALE GENOMIC DNA]</scope>
    <source>
        <strain>ATCC 8482 / DSM 1447 / JCM 5826 / CCUG 4940 / NBRC 14291 / NCTC 11154</strain>
    </source>
</reference>
<sequence length="711" mass="78627">MINPIVKTIELPDGRTITLETGKLAKQADGSVMLRMGNTMLLATVCAAKDAVPGTDFMPLQVEYKEKYSAFGRFPGGFTKREGKASDYEILTCRLVDRALRPLFPDNFHAEVYVNIVLFSADGIDMPDALAGLAASAALAVSDIPFGGPISEVRVARIDGQFVINPTFEQLEKADMDLMVAATYDNIMMVEGEMQEVSEQDLLAAMKAAHEAIKVHCKAQMELMEEVGSTVKREYCHEENDEDLRKAVREACYDKAYAIAASGNRNKHERQDAFDAIRDEFKTQYTEEELEEKGALIDRYYHDVEKEAMRRCILDEGKRLDGRKTTEIRPIWCEVGYLPGPHGSAIFTRGETQSLTSVTLGTKLDEKIVDDVLDQHRERFLLHYNFPPYSTGEAKAQRGVGRREIGHGHLAWRALKGQIPAGYPYTVRVVSDIMESNGSSSMATVCAGTLALMDAGVAMKKPVSGIAMGLIKNAGEEKYAVLSDILGDEDHLGDMDFKVTGTRDGITATQMDIKVDGLSFEILEKALLQAKEGREHILNKLTECIAEPRKDLKPHAPRIETMTIPKEFIGAIIGPGGKIIQGMQEETGATITIEETDGVGRIEIAGTNKKCIDDAMRIIKGIVAVPEVGEVYVGKVRSVMPYGVFVEFLPGKDGLLHISEIDWKRLETIEEAGLKEGDEIEVKLLDIDPKTGKFKLSHKVLLPRPEKQEKK</sequence>
<gene>
    <name evidence="1" type="primary">pnp</name>
    <name type="ordered locus">BVU_1431</name>
</gene>
<feature type="chain" id="PRO_0000329525" description="Polyribonucleotide nucleotidyltransferase">
    <location>
        <begin position="1"/>
        <end position="711"/>
    </location>
</feature>
<feature type="domain" description="KH" evidence="1">
    <location>
        <begin position="557"/>
        <end position="619"/>
    </location>
</feature>
<feature type="domain" description="S1 motif" evidence="1">
    <location>
        <begin position="629"/>
        <end position="699"/>
    </location>
</feature>
<feature type="binding site" evidence="1">
    <location>
        <position position="490"/>
    </location>
    <ligand>
        <name>Mg(2+)</name>
        <dbReference type="ChEBI" id="CHEBI:18420"/>
    </ligand>
</feature>
<feature type="binding site" evidence="1">
    <location>
        <position position="496"/>
    </location>
    <ligand>
        <name>Mg(2+)</name>
        <dbReference type="ChEBI" id="CHEBI:18420"/>
    </ligand>
</feature>
<protein>
    <recommendedName>
        <fullName evidence="1">Polyribonucleotide nucleotidyltransferase</fullName>
        <ecNumber evidence="1">2.7.7.8</ecNumber>
    </recommendedName>
    <alternativeName>
        <fullName evidence="1">Polynucleotide phosphorylase</fullName>
        <shortName evidence="1">PNPase</shortName>
    </alternativeName>
</protein>
<name>PNP_PHOV8</name>
<dbReference type="EC" id="2.7.7.8" evidence="1"/>
<dbReference type="EMBL" id="CP000139">
    <property type="protein sequence ID" value="ABR39119.1"/>
    <property type="molecule type" value="Genomic_DNA"/>
</dbReference>
<dbReference type="RefSeq" id="WP_011965175.1">
    <property type="nucleotide sequence ID" value="NZ_JANSWM010000116.1"/>
</dbReference>
<dbReference type="SMR" id="A6L0A5"/>
<dbReference type="STRING" id="435590.BVU_1431"/>
<dbReference type="PaxDb" id="435590-BVU_1431"/>
<dbReference type="GeneID" id="5302397"/>
<dbReference type="KEGG" id="bvu:BVU_1431"/>
<dbReference type="eggNOG" id="COG1185">
    <property type="taxonomic scope" value="Bacteria"/>
</dbReference>
<dbReference type="HOGENOM" id="CLU_004217_2_2_10"/>
<dbReference type="BioCyc" id="BVUL435590:G1G59-1499-MONOMER"/>
<dbReference type="Proteomes" id="UP000002861">
    <property type="component" value="Chromosome"/>
</dbReference>
<dbReference type="GO" id="GO:0005829">
    <property type="term" value="C:cytosol"/>
    <property type="evidence" value="ECO:0007669"/>
    <property type="project" value="TreeGrafter"/>
</dbReference>
<dbReference type="GO" id="GO:0000175">
    <property type="term" value="F:3'-5'-RNA exonuclease activity"/>
    <property type="evidence" value="ECO:0007669"/>
    <property type="project" value="TreeGrafter"/>
</dbReference>
<dbReference type="GO" id="GO:0000287">
    <property type="term" value="F:magnesium ion binding"/>
    <property type="evidence" value="ECO:0007669"/>
    <property type="project" value="UniProtKB-UniRule"/>
</dbReference>
<dbReference type="GO" id="GO:0004654">
    <property type="term" value="F:polyribonucleotide nucleotidyltransferase activity"/>
    <property type="evidence" value="ECO:0007669"/>
    <property type="project" value="UniProtKB-UniRule"/>
</dbReference>
<dbReference type="GO" id="GO:0003723">
    <property type="term" value="F:RNA binding"/>
    <property type="evidence" value="ECO:0007669"/>
    <property type="project" value="UniProtKB-UniRule"/>
</dbReference>
<dbReference type="GO" id="GO:0006402">
    <property type="term" value="P:mRNA catabolic process"/>
    <property type="evidence" value="ECO:0007669"/>
    <property type="project" value="UniProtKB-UniRule"/>
</dbReference>
<dbReference type="GO" id="GO:0006396">
    <property type="term" value="P:RNA processing"/>
    <property type="evidence" value="ECO:0007669"/>
    <property type="project" value="InterPro"/>
</dbReference>
<dbReference type="CDD" id="cd02393">
    <property type="entry name" value="KH-I_PNPase"/>
    <property type="match status" value="1"/>
</dbReference>
<dbReference type="CDD" id="cd11363">
    <property type="entry name" value="RNase_PH_PNPase_1"/>
    <property type="match status" value="1"/>
</dbReference>
<dbReference type="CDD" id="cd11364">
    <property type="entry name" value="RNase_PH_PNPase_2"/>
    <property type="match status" value="1"/>
</dbReference>
<dbReference type="FunFam" id="2.40.50.140:FF:000178">
    <property type="entry name" value="Polyribonucleotide nucleotidyltransferase"/>
    <property type="match status" value="1"/>
</dbReference>
<dbReference type="FunFam" id="3.30.1370.10:FF:000001">
    <property type="entry name" value="Polyribonucleotide nucleotidyltransferase"/>
    <property type="match status" value="1"/>
</dbReference>
<dbReference type="FunFam" id="3.30.230.70:FF:000001">
    <property type="entry name" value="Polyribonucleotide nucleotidyltransferase"/>
    <property type="match status" value="1"/>
</dbReference>
<dbReference type="FunFam" id="3.30.230.70:FF:000002">
    <property type="entry name" value="Polyribonucleotide nucleotidyltransferase"/>
    <property type="match status" value="1"/>
</dbReference>
<dbReference type="Gene3D" id="3.30.230.70">
    <property type="entry name" value="GHMP Kinase, N-terminal domain"/>
    <property type="match status" value="2"/>
</dbReference>
<dbReference type="Gene3D" id="3.30.1370.10">
    <property type="entry name" value="K Homology domain, type 1"/>
    <property type="match status" value="1"/>
</dbReference>
<dbReference type="Gene3D" id="2.40.50.140">
    <property type="entry name" value="Nucleic acid-binding proteins"/>
    <property type="match status" value="1"/>
</dbReference>
<dbReference type="HAMAP" id="MF_01595">
    <property type="entry name" value="PNPase"/>
    <property type="match status" value="1"/>
</dbReference>
<dbReference type="InterPro" id="IPR001247">
    <property type="entry name" value="ExoRNase_PH_dom1"/>
</dbReference>
<dbReference type="InterPro" id="IPR015847">
    <property type="entry name" value="ExoRNase_PH_dom2"/>
</dbReference>
<dbReference type="InterPro" id="IPR036345">
    <property type="entry name" value="ExoRNase_PH_dom2_sf"/>
</dbReference>
<dbReference type="InterPro" id="IPR004087">
    <property type="entry name" value="KH_dom"/>
</dbReference>
<dbReference type="InterPro" id="IPR004088">
    <property type="entry name" value="KH_dom_type_1"/>
</dbReference>
<dbReference type="InterPro" id="IPR036612">
    <property type="entry name" value="KH_dom_type_1_sf"/>
</dbReference>
<dbReference type="InterPro" id="IPR012340">
    <property type="entry name" value="NA-bd_OB-fold"/>
</dbReference>
<dbReference type="InterPro" id="IPR012162">
    <property type="entry name" value="PNPase"/>
</dbReference>
<dbReference type="InterPro" id="IPR027408">
    <property type="entry name" value="PNPase/RNase_PH_dom_sf"/>
</dbReference>
<dbReference type="InterPro" id="IPR015848">
    <property type="entry name" value="PNPase_PH_RNA-bd_bac/org-type"/>
</dbReference>
<dbReference type="InterPro" id="IPR036456">
    <property type="entry name" value="PNPase_PH_RNA-bd_sf"/>
</dbReference>
<dbReference type="InterPro" id="IPR020568">
    <property type="entry name" value="Ribosomal_Su5_D2-typ_SF"/>
</dbReference>
<dbReference type="InterPro" id="IPR003029">
    <property type="entry name" value="S1_domain"/>
</dbReference>
<dbReference type="NCBIfam" id="TIGR03591">
    <property type="entry name" value="polynuc_phos"/>
    <property type="match status" value="1"/>
</dbReference>
<dbReference type="NCBIfam" id="NF008805">
    <property type="entry name" value="PRK11824.1"/>
    <property type="match status" value="1"/>
</dbReference>
<dbReference type="PANTHER" id="PTHR11252">
    <property type="entry name" value="POLYRIBONUCLEOTIDE NUCLEOTIDYLTRANSFERASE"/>
    <property type="match status" value="1"/>
</dbReference>
<dbReference type="PANTHER" id="PTHR11252:SF0">
    <property type="entry name" value="POLYRIBONUCLEOTIDE NUCLEOTIDYLTRANSFERASE 1, MITOCHONDRIAL"/>
    <property type="match status" value="1"/>
</dbReference>
<dbReference type="Pfam" id="PF00013">
    <property type="entry name" value="KH_1"/>
    <property type="match status" value="1"/>
</dbReference>
<dbReference type="Pfam" id="PF03726">
    <property type="entry name" value="PNPase"/>
    <property type="match status" value="1"/>
</dbReference>
<dbReference type="Pfam" id="PF01138">
    <property type="entry name" value="RNase_PH"/>
    <property type="match status" value="2"/>
</dbReference>
<dbReference type="Pfam" id="PF03725">
    <property type="entry name" value="RNase_PH_C"/>
    <property type="match status" value="2"/>
</dbReference>
<dbReference type="Pfam" id="PF00575">
    <property type="entry name" value="S1"/>
    <property type="match status" value="1"/>
</dbReference>
<dbReference type="PIRSF" id="PIRSF005499">
    <property type="entry name" value="PNPase"/>
    <property type="match status" value="1"/>
</dbReference>
<dbReference type="SMART" id="SM00322">
    <property type="entry name" value="KH"/>
    <property type="match status" value="1"/>
</dbReference>
<dbReference type="SMART" id="SM00316">
    <property type="entry name" value="S1"/>
    <property type="match status" value="1"/>
</dbReference>
<dbReference type="SUPFAM" id="SSF54791">
    <property type="entry name" value="Eukaryotic type KH-domain (KH-domain type I)"/>
    <property type="match status" value="1"/>
</dbReference>
<dbReference type="SUPFAM" id="SSF50249">
    <property type="entry name" value="Nucleic acid-binding proteins"/>
    <property type="match status" value="1"/>
</dbReference>
<dbReference type="SUPFAM" id="SSF46915">
    <property type="entry name" value="Polynucleotide phosphorylase/guanosine pentaphosphate synthase (PNPase/GPSI), domain 3"/>
    <property type="match status" value="1"/>
</dbReference>
<dbReference type="SUPFAM" id="SSF55666">
    <property type="entry name" value="Ribonuclease PH domain 2-like"/>
    <property type="match status" value="2"/>
</dbReference>
<dbReference type="SUPFAM" id="SSF54211">
    <property type="entry name" value="Ribosomal protein S5 domain 2-like"/>
    <property type="match status" value="2"/>
</dbReference>
<dbReference type="PROSITE" id="PS50084">
    <property type="entry name" value="KH_TYPE_1"/>
    <property type="match status" value="1"/>
</dbReference>
<dbReference type="PROSITE" id="PS50126">
    <property type="entry name" value="S1"/>
    <property type="match status" value="1"/>
</dbReference>
<organism>
    <name type="scientific">Phocaeicola vulgatus (strain ATCC 8482 / DSM 1447 / JCM 5826 / CCUG 4940 / NBRC 14291 / NCTC 11154)</name>
    <name type="common">Bacteroides vulgatus</name>
    <dbReference type="NCBI Taxonomy" id="435590"/>
    <lineage>
        <taxon>Bacteria</taxon>
        <taxon>Pseudomonadati</taxon>
        <taxon>Bacteroidota</taxon>
        <taxon>Bacteroidia</taxon>
        <taxon>Bacteroidales</taxon>
        <taxon>Bacteroidaceae</taxon>
        <taxon>Phocaeicola</taxon>
    </lineage>
</organism>
<accession>A6L0A5</accession>
<keyword id="KW-0963">Cytoplasm</keyword>
<keyword id="KW-0460">Magnesium</keyword>
<keyword id="KW-0479">Metal-binding</keyword>
<keyword id="KW-0548">Nucleotidyltransferase</keyword>
<keyword id="KW-0694">RNA-binding</keyword>
<keyword id="KW-0808">Transferase</keyword>
<proteinExistence type="inferred from homology"/>
<comment type="function">
    <text evidence="1">Involved in mRNA degradation. Catalyzes the phosphorolysis of single-stranded polyribonucleotides processively in the 3'- to 5'-direction.</text>
</comment>
<comment type="catalytic activity">
    <reaction evidence="1">
        <text>RNA(n+1) + phosphate = RNA(n) + a ribonucleoside 5'-diphosphate</text>
        <dbReference type="Rhea" id="RHEA:22096"/>
        <dbReference type="Rhea" id="RHEA-COMP:14527"/>
        <dbReference type="Rhea" id="RHEA-COMP:17342"/>
        <dbReference type="ChEBI" id="CHEBI:43474"/>
        <dbReference type="ChEBI" id="CHEBI:57930"/>
        <dbReference type="ChEBI" id="CHEBI:140395"/>
        <dbReference type="EC" id="2.7.7.8"/>
    </reaction>
</comment>
<comment type="cofactor">
    <cofactor evidence="1">
        <name>Mg(2+)</name>
        <dbReference type="ChEBI" id="CHEBI:18420"/>
    </cofactor>
</comment>
<comment type="subcellular location">
    <subcellularLocation>
        <location evidence="1">Cytoplasm</location>
    </subcellularLocation>
</comment>
<comment type="similarity">
    <text evidence="1">Belongs to the polyribonucleotide nucleotidyltransferase family.</text>
</comment>
<evidence type="ECO:0000255" key="1">
    <source>
        <dbReference type="HAMAP-Rule" id="MF_01595"/>
    </source>
</evidence>